<accession>P65215</accession>
<accession>Q8XGR9</accession>
<evidence type="ECO:0000255" key="1">
    <source>
        <dbReference type="HAMAP-Rule" id="MF_00056"/>
    </source>
</evidence>
<reference key="1">
    <citation type="journal article" date="2001" name="Nature">
        <title>Complete genome sequence of Salmonella enterica serovar Typhimurium LT2.</title>
        <authorList>
            <person name="McClelland M."/>
            <person name="Sanderson K.E."/>
            <person name="Spieth J."/>
            <person name="Clifton S.W."/>
            <person name="Latreille P."/>
            <person name="Courtney L."/>
            <person name="Porwollik S."/>
            <person name="Ali J."/>
            <person name="Dante M."/>
            <person name="Du F."/>
            <person name="Hou S."/>
            <person name="Layman D."/>
            <person name="Leonard S."/>
            <person name="Nguyen C."/>
            <person name="Scott K."/>
            <person name="Holmes A."/>
            <person name="Grewal N."/>
            <person name="Mulvaney E."/>
            <person name="Ryan E."/>
            <person name="Sun H."/>
            <person name="Florea L."/>
            <person name="Miller W."/>
            <person name="Stoneking T."/>
            <person name="Nhan M."/>
            <person name="Waterston R."/>
            <person name="Wilson R.K."/>
        </authorList>
    </citation>
    <scope>NUCLEOTIDE SEQUENCE [LARGE SCALE GENOMIC DNA]</scope>
    <source>
        <strain>LT2 / SGSC1412 / ATCC 700720</strain>
    </source>
</reference>
<sequence length="284" mass="30795">MKQKVVNIGDIKVANDLPFVLFGGMNVLESRDLAMRICEHYVTVTQKLGIPYVFKASFDKANRSSIHSYRGPGLEEGMKIFQELKQTFGVKVITDVHEASQAQPVADVVDVIQLPAFLARQTDLVEAMAKTGAVINVKKPQFVSPGQMGNIVDKFHEGGNDKVILCDRGANFGYDNLVVDMLGFSVMKKVSGNSPVIFDVTHALQCRDPFGAASGGRRGQVTELARAGMAVGLAGLFLESHPDPANAKCDGPSALPLAKLEQFLTQIKAIDDLVKSFDELDTEN</sequence>
<dbReference type="EC" id="2.5.1.55" evidence="1"/>
<dbReference type="EMBL" id="AE006468">
    <property type="protein sequence ID" value="AAL20687.1"/>
    <property type="molecule type" value="Genomic_DNA"/>
</dbReference>
<dbReference type="RefSeq" id="NP_460728.1">
    <property type="nucleotide sequence ID" value="NC_003197.2"/>
</dbReference>
<dbReference type="RefSeq" id="WP_000811046.1">
    <property type="nucleotide sequence ID" value="NC_003197.2"/>
</dbReference>
<dbReference type="SMR" id="P65215"/>
<dbReference type="STRING" id="99287.STM1772"/>
<dbReference type="PaxDb" id="99287-STM1772"/>
<dbReference type="GeneID" id="1253291"/>
<dbReference type="KEGG" id="stm:STM1772"/>
<dbReference type="PATRIC" id="fig|99287.12.peg.1867"/>
<dbReference type="HOGENOM" id="CLU_036666_0_0_6"/>
<dbReference type="OMA" id="FGYHNLV"/>
<dbReference type="PhylomeDB" id="P65215"/>
<dbReference type="BioCyc" id="SENT99287:STM1772-MONOMER"/>
<dbReference type="UniPathway" id="UPA00030"/>
<dbReference type="UniPathway" id="UPA00357">
    <property type="reaction ID" value="UER00474"/>
</dbReference>
<dbReference type="Proteomes" id="UP000001014">
    <property type="component" value="Chromosome"/>
</dbReference>
<dbReference type="GO" id="GO:0005829">
    <property type="term" value="C:cytosol"/>
    <property type="evidence" value="ECO:0000318"/>
    <property type="project" value="GO_Central"/>
</dbReference>
<dbReference type="GO" id="GO:0008676">
    <property type="term" value="F:3-deoxy-8-phosphooctulonate synthase activity"/>
    <property type="evidence" value="ECO:0000318"/>
    <property type="project" value="GO_Central"/>
</dbReference>
<dbReference type="GO" id="GO:0019294">
    <property type="term" value="P:keto-3-deoxy-D-manno-octulosonic acid biosynthetic process"/>
    <property type="evidence" value="ECO:0000318"/>
    <property type="project" value="GO_Central"/>
</dbReference>
<dbReference type="FunFam" id="3.20.20.70:FF:000058">
    <property type="entry name" value="2-dehydro-3-deoxyphosphooctonate aldolase"/>
    <property type="match status" value="1"/>
</dbReference>
<dbReference type="Gene3D" id="3.20.20.70">
    <property type="entry name" value="Aldolase class I"/>
    <property type="match status" value="1"/>
</dbReference>
<dbReference type="HAMAP" id="MF_00056">
    <property type="entry name" value="KDO8P_synth"/>
    <property type="match status" value="1"/>
</dbReference>
<dbReference type="InterPro" id="IPR013785">
    <property type="entry name" value="Aldolase_TIM"/>
</dbReference>
<dbReference type="InterPro" id="IPR006218">
    <property type="entry name" value="DAHP1/KDSA"/>
</dbReference>
<dbReference type="InterPro" id="IPR006269">
    <property type="entry name" value="KDO8P_synthase"/>
</dbReference>
<dbReference type="NCBIfam" id="TIGR01362">
    <property type="entry name" value="KDO8P_synth"/>
    <property type="match status" value="1"/>
</dbReference>
<dbReference type="NCBIfam" id="NF003543">
    <property type="entry name" value="PRK05198.1"/>
    <property type="match status" value="1"/>
</dbReference>
<dbReference type="NCBIfam" id="NF009109">
    <property type="entry name" value="PRK12457.1"/>
    <property type="match status" value="1"/>
</dbReference>
<dbReference type="PANTHER" id="PTHR21057">
    <property type="entry name" value="PHOSPHO-2-DEHYDRO-3-DEOXYHEPTONATE ALDOLASE"/>
    <property type="match status" value="1"/>
</dbReference>
<dbReference type="Pfam" id="PF00793">
    <property type="entry name" value="DAHP_synth_1"/>
    <property type="match status" value="1"/>
</dbReference>
<dbReference type="SUPFAM" id="SSF51569">
    <property type="entry name" value="Aldolase"/>
    <property type="match status" value="1"/>
</dbReference>
<organism>
    <name type="scientific">Salmonella typhimurium (strain LT2 / SGSC1412 / ATCC 700720)</name>
    <dbReference type="NCBI Taxonomy" id="99287"/>
    <lineage>
        <taxon>Bacteria</taxon>
        <taxon>Pseudomonadati</taxon>
        <taxon>Pseudomonadota</taxon>
        <taxon>Gammaproteobacteria</taxon>
        <taxon>Enterobacterales</taxon>
        <taxon>Enterobacteriaceae</taxon>
        <taxon>Salmonella</taxon>
    </lineage>
</organism>
<feature type="chain" id="PRO_0000187164" description="2-dehydro-3-deoxyphosphooctonate aldolase">
    <location>
        <begin position="1"/>
        <end position="284"/>
    </location>
</feature>
<protein>
    <recommendedName>
        <fullName evidence="1">2-dehydro-3-deoxyphosphooctonate aldolase</fullName>
        <ecNumber evidence="1">2.5.1.55</ecNumber>
    </recommendedName>
    <alternativeName>
        <fullName evidence="1">3-deoxy-D-manno-octulosonic acid 8-phosphate synthase</fullName>
    </alternativeName>
    <alternativeName>
        <fullName evidence="1">KDO-8-phosphate synthase</fullName>
        <shortName evidence="1">KDO 8-P synthase</shortName>
        <shortName evidence="1">KDOPS</shortName>
    </alternativeName>
    <alternativeName>
        <fullName evidence="1">Phospho-2-dehydro-3-deoxyoctonate aldolase</fullName>
    </alternativeName>
</protein>
<gene>
    <name evidence="1" type="primary">kdsA</name>
    <name type="ordered locus">STM1772</name>
</gene>
<keyword id="KW-0963">Cytoplasm</keyword>
<keyword id="KW-0448">Lipopolysaccharide biosynthesis</keyword>
<keyword id="KW-1185">Reference proteome</keyword>
<keyword id="KW-0808">Transferase</keyword>
<name>KDSA_SALTY</name>
<comment type="catalytic activity">
    <reaction evidence="1">
        <text>D-arabinose 5-phosphate + phosphoenolpyruvate + H2O = 3-deoxy-alpha-D-manno-2-octulosonate-8-phosphate + phosphate</text>
        <dbReference type="Rhea" id="RHEA:14053"/>
        <dbReference type="ChEBI" id="CHEBI:15377"/>
        <dbReference type="ChEBI" id="CHEBI:43474"/>
        <dbReference type="ChEBI" id="CHEBI:57693"/>
        <dbReference type="ChEBI" id="CHEBI:58702"/>
        <dbReference type="ChEBI" id="CHEBI:85985"/>
        <dbReference type="EC" id="2.5.1.55"/>
    </reaction>
</comment>
<comment type="pathway">
    <text evidence="1">Carbohydrate biosynthesis; 3-deoxy-D-manno-octulosonate biosynthesis; 3-deoxy-D-manno-octulosonate from D-ribulose 5-phosphate: step 2/3.</text>
</comment>
<comment type="pathway">
    <text evidence="1">Bacterial outer membrane biogenesis; lipopolysaccharide biosynthesis.</text>
</comment>
<comment type="subcellular location">
    <subcellularLocation>
        <location evidence="1">Cytoplasm</location>
    </subcellularLocation>
</comment>
<comment type="similarity">
    <text evidence="1">Belongs to the KdsA family.</text>
</comment>
<proteinExistence type="inferred from homology"/>